<comment type="function">
    <text evidence="1">This is one of the proteins that binds to the 5S RNA in the ribosome where it forms part of the central protuberance.</text>
</comment>
<comment type="subunit">
    <text evidence="1">Part of the 50S ribosomal subunit; part of the 5S rRNA/L5/L18/L25 subcomplex. Contacts the 5S rRNA. Binds to the 5S rRNA independently of L5 and L18.</text>
</comment>
<comment type="similarity">
    <text evidence="1">Belongs to the bacterial ribosomal protein bL25 family.</text>
</comment>
<protein>
    <recommendedName>
        <fullName evidence="1">Large ribosomal subunit protein bL25</fullName>
    </recommendedName>
    <alternativeName>
        <fullName evidence="2">50S ribosomal protein L25</fullName>
    </alternativeName>
</protein>
<accession>Q0HUS4</accession>
<gene>
    <name evidence="1" type="primary">rplY</name>
    <name type="ordered locus">Shewmr7_2143</name>
</gene>
<sequence>MSYTIQAQTRTEIGKGSSRRLRHAGKVPAVIYGAGKEPVSIVFDHKDIINIQTNEDFYTSVVTIVLDGKEVGVRAQAMQRHAFKPMIEHVDFVYA</sequence>
<organism>
    <name type="scientific">Shewanella sp. (strain MR-7)</name>
    <dbReference type="NCBI Taxonomy" id="60481"/>
    <lineage>
        <taxon>Bacteria</taxon>
        <taxon>Pseudomonadati</taxon>
        <taxon>Pseudomonadota</taxon>
        <taxon>Gammaproteobacteria</taxon>
        <taxon>Alteromonadales</taxon>
        <taxon>Shewanellaceae</taxon>
        <taxon>Shewanella</taxon>
    </lineage>
</organism>
<proteinExistence type="inferred from homology"/>
<name>RL25_SHESR</name>
<reference key="1">
    <citation type="submission" date="2006-08" db="EMBL/GenBank/DDBJ databases">
        <title>Complete sequence of chromosome 1 of Shewanella sp. MR-7.</title>
        <authorList>
            <person name="Copeland A."/>
            <person name="Lucas S."/>
            <person name="Lapidus A."/>
            <person name="Barry K."/>
            <person name="Detter J.C."/>
            <person name="Glavina del Rio T."/>
            <person name="Hammon N."/>
            <person name="Israni S."/>
            <person name="Dalin E."/>
            <person name="Tice H."/>
            <person name="Pitluck S."/>
            <person name="Kiss H."/>
            <person name="Brettin T."/>
            <person name="Bruce D."/>
            <person name="Han C."/>
            <person name="Tapia R."/>
            <person name="Gilna P."/>
            <person name="Schmutz J."/>
            <person name="Larimer F."/>
            <person name="Land M."/>
            <person name="Hauser L."/>
            <person name="Kyrpides N."/>
            <person name="Mikhailova N."/>
            <person name="Nealson K."/>
            <person name="Konstantinidis K."/>
            <person name="Klappenbach J."/>
            <person name="Tiedje J."/>
            <person name="Richardson P."/>
        </authorList>
    </citation>
    <scope>NUCLEOTIDE SEQUENCE [LARGE SCALE GENOMIC DNA]</scope>
    <source>
        <strain>MR-7</strain>
    </source>
</reference>
<keyword id="KW-0687">Ribonucleoprotein</keyword>
<keyword id="KW-0689">Ribosomal protein</keyword>
<keyword id="KW-0694">RNA-binding</keyword>
<keyword id="KW-0699">rRNA-binding</keyword>
<feature type="chain" id="PRO_1000052970" description="Large ribosomal subunit protein bL25">
    <location>
        <begin position="1"/>
        <end position="95"/>
    </location>
</feature>
<dbReference type="EMBL" id="CP000444">
    <property type="protein sequence ID" value="ABI43131.1"/>
    <property type="molecule type" value="Genomic_DNA"/>
</dbReference>
<dbReference type="SMR" id="Q0HUS4"/>
<dbReference type="KEGG" id="shm:Shewmr7_2143"/>
<dbReference type="HOGENOM" id="CLU_137946_0_0_6"/>
<dbReference type="GO" id="GO:0022625">
    <property type="term" value="C:cytosolic large ribosomal subunit"/>
    <property type="evidence" value="ECO:0007669"/>
    <property type="project" value="TreeGrafter"/>
</dbReference>
<dbReference type="GO" id="GO:0008097">
    <property type="term" value="F:5S rRNA binding"/>
    <property type="evidence" value="ECO:0007669"/>
    <property type="project" value="InterPro"/>
</dbReference>
<dbReference type="GO" id="GO:0003735">
    <property type="term" value="F:structural constituent of ribosome"/>
    <property type="evidence" value="ECO:0007669"/>
    <property type="project" value="InterPro"/>
</dbReference>
<dbReference type="GO" id="GO:0006412">
    <property type="term" value="P:translation"/>
    <property type="evidence" value="ECO:0007669"/>
    <property type="project" value="UniProtKB-UniRule"/>
</dbReference>
<dbReference type="CDD" id="cd00495">
    <property type="entry name" value="Ribosomal_L25_TL5_CTC"/>
    <property type="match status" value="1"/>
</dbReference>
<dbReference type="FunFam" id="2.40.240.10:FF:000002">
    <property type="entry name" value="50S ribosomal protein L25"/>
    <property type="match status" value="1"/>
</dbReference>
<dbReference type="Gene3D" id="2.40.240.10">
    <property type="entry name" value="Ribosomal Protein L25, Chain P"/>
    <property type="match status" value="1"/>
</dbReference>
<dbReference type="HAMAP" id="MF_01336">
    <property type="entry name" value="Ribosomal_bL25"/>
    <property type="match status" value="1"/>
</dbReference>
<dbReference type="InterPro" id="IPR020056">
    <property type="entry name" value="Rbsml_bL25/Gln-tRNA_synth_N"/>
</dbReference>
<dbReference type="InterPro" id="IPR011035">
    <property type="entry name" value="Ribosomal_bL25/Gln-tRNA_synth"/>
</dbReference>
<dbReference type="InterPro" id="IPR001021">
    <property type="entry name" value="Ribosomal_bL25_long"/>
</dbReference>
<dbReference type="InterPro" id="IPR020055">
    <property type="entry name" value="Ribosomal_bL25_short"/>
</dbReference>
<dbReference type="InterPro" id="IPR029751">
    <property type="entry name" value="Ribosomal_L25_dom"/>
</dbReference>
<dbReference type="InterPro" id="IPR020930">
    <property type="entry name" value="Ribosomal_uL5_bac-type"/>
</dbReference>
<dbReference type="NCBIfam" id="TIGR00731">
    <property type="entry name" value="bL25_bact_ctc"/>
    <property type="match status" value="1"/>
</dbReference>
<dbReference type="NCBIfam" id="NF004612">
    <property type="entry name" value="PRK05943.1"/>
    <property type="match status" value="1"/>
</dbReference>
<dbReference type="PANTHER" id="PTHR33284">
    <property type="entry name" value="RIBOSOMAL PROTEIN L25/GLN-TRNA SYNTHETASE, ANTI-CODON-BINDING DOMAIN-CONTAINING PROTEIN"/>
    <property type="match status" value="1"/>
</dbReference>
<dbReference type="PANTHER" id="PTHR33284:SF1">
    <property type="entry name" value="RIBOSOMAL PROTEIN L25_GLN-TRNA SYNTHETASE, ANTI-CODON-BINDING DOMAIN-CONTAINING PROTEIN"/>
    <property type="match status" value="1"/>
</dbReference>
<dbReference type="Pfam" id="PF01386">
    <property type="entry name" value="Ribosomal_L25p"/>
    <property type="match status" value="1"/>
</dbReference>
<dbReference type="SUPFAM" id="SSF50715">
    <property type="entry name" value="Ribosomal protein L25-like"/>
    <property type="match status" value="1"/>
</dbReference>
<evidence type="ECO:0000255" key="1">
    <source>
        <dbReference type="HAMAP-Rule" id="MF_01336"/>
    </source>
</evidence>
<evidence type="ECO:0000305" key="2"/>